<accession>P09747</accession>
<accession>Q9JMU0</accession>
<reference key="1">
    <citation type="journal article" date="1987" name="Nucleic Acids Res.">
        <title>Shufflon: multi-inversion of four contiguous DNA segments of plasmid R64 creates seven different open reading frames.</title>
        <authorList>
            <person name="Komano T."/>
            <person name="Kubo A."/>
            <person name="Nisioka T."/>
        </authorList>
    </citation>
    <scope>NUCLEOTIDE SEQUENCE [GENOMIC DNA]</scope>
</reference>
<dbReference type="EMBL" id="AB027308">
    <property type="protein sequence ID" value="BAA77988.1"/>
    <property type="molecule type" value="Genomic_DNA"/>
</dbReference>
<dbReference type="PIR" id="C26421">
    <property type="entry name" value="C26421"/>
</dbReference>
<dbReference type="InterPro" id="IPR029017">
    <property type="entry name" value="Enolase-like_N"/>
</dbReference>
<dbReference type="InterPro" id="IPR007001">
    <property type="entry name" value="Shufflon_N"/>
</dbReference>
<dbReference type="Pfam" id="PF04917">
    <property type="entry name" value="Shufflon_N"/>
    <property type="match status" value="1"/>
</dbReference>
<dbReference type="SUPFAM" id="SSF54826">
    <property type="entry name" value="Enolase N-terminal domain-like"/>
    <property type="match status" value="1"/>
</dbReference>
<feature type="chain" id="PRO_0000097744" description="Shufflon protein B">
    <location>
        <begin position="1"/>
        <end position="442"/>
    </location>
</feature>
<feature type="region of interest" description="Constant region">
    <location>
        <begin position="1"/>
        <end position="361"/>
    </location>
</feature>
<feature type="region of interest" description="Variable region">
    <location>
        <begin position="362"/>
        <end position="442"/>
    </location>
</feature>
<protein>
    <recommendedName>
        <fullName>Shufflon protein B</fullName>
    </recommendedName>
</protein>
<proteinExistence type="predicted"/>
<geneLocation type="plasmid">
    <name>IncI1 R64</name>
</geneLocation>
<name>SHU3_ECOLX</name>
<sequence>MKKYDRGWASLETGAALLIVMLLIAWGAGIWQDYIQTKGWQTEARLVSNWTSAARSYIGKNYTTLQGSSTTTTPAVITTTMLKNTGFLSSGFTETNSEGQRLQAYVVRNAQNPELLQAMVVSSGGTPYPVKALIQMAKDITTGLGGYIQDGKTATGALRSWSVALSNYGAKSGNGHIAVLLSTDELSGAAEDTDRLYRFQVNGRPDLNKMHTAIDMGSNNLNNVGAVNAQTGNFSGNVNGVNGTFSGQVKGNSGNFDVNVTAGGDIRSNNGWLITRNSKGWLNETHGGGFYMSDGSWVRSVNNKGIYTGGQVKGGTVRADGRLYTGEYLQLERTAVAGASCSPNGLVGRDNTGAILSCQSGTWKSSSASIWTNIKTFTLYPKNTQVLGRFKLCINTYRIDGREMAETEVVPIDMPDSNGEMIWQAKNYTQYSSYFMKITCLK</sequence>
<organism>
    <name type="scientific">Escherichia coli</name>
    <dbReference type="NCBI Taxonomy" id="562"/>
    <lineage>
        <taxon>Bacteria</taxon>
        <taxon>Pseudomonadati</taxon>
        <taxon>Pseudomonadota</taxon>
        <taxon>Gammaproteobacteria</taxon>
        <taxon>Enterobacterales</taxon>
        <taxon>Enterobacteriaceae</taxon>
        <taxon>Escherichia</taxon>
    </lineage>
</organism>
<keyword id="KW-0614">Plasmid</keyword>
<comment type="miscellaneous">
    <text>This protein is expressed by a shufflon (= clustered inversion region that works as a biological switch). The orfs of this region share a constant N-terminus, while the C-terminus is variable.</text>
</comment>